<sequence length="774" mass="83810">MRRRVALSTAIALLVGAQLCVAAEVEVAGAGGGVVRRRSLHQPFFPIEWSPPPPMSGSEAVPPPPPAAAASATTGGGRSTTTVMNTVAIALSAGLVALAVASYSCCLLLRRRRREEEDDGDRAAKRAVGAAAAVAARVPSDVGSSSRQHRSPPPSSTASDAIYLDPLTTLVEVRQHEKSPDLRPLPLLKQPSPDLRPLPPLKRPESQPPPPPPSTPPLTTTGYSTDEEDQATYYTAPKTAMSSFSRSTSQHSTLEQTAMPPMAAPAPPQTNPPRPVRPPPPPPPPRQRLLRPLPAESPPPAALANLELTGSPVKPAVEDRGGENSGAARPPKPPHLKPLHWDKLRAISGRTTVWDQVKNSDTFRVDEEAMESLFLNSGGGGAGSSDPAARRGGSGKQERRLLDPKRLQNVAIMLKSLNVAADEVIGALVRGNPEDLGSEFYETLAKMAPTKEEELKLKGYSGDLSKIDPAERFLKDVLGVPFAFERVDAMLYRANFDNEVNYLRKSFGTLEAACEELRSSKLFLKLLDAVLKTGNRMNDGTNRGEARAFKLDTLLKLADIKSTDGRTTLLHFVVKEIIRSEGFDSDQSAVNPGSGSKEQFKRDGLKLLAGLSSELSNVKRAATLEMDTLSGNILRLEADLEKVKLVLQLKETCSDQGASENFFQAMVVFLRRAEAEIKNMKTAEENALRLVKETTEYFHGDATKEEPHPLRIFVVVDEFLLILDRVCRDVGRTPERVMMGSGKSFRVPAGTSLPPHRNENRRVLSSSDEDSSSS</sequence>
<comment type="subcellular location">
    <subcellularLocation>
        <location evidence="4">Membrane</location>
        <topology evidence="4">Single-pass membrane protein</topology>
    </subcellularLocation>
</comment>
<comment type="similarity">
    <text evidence="4">Belongs to the formin-like family. Class-I subfamily.</text>
</comment>
<comment type="sequence caution" evidence="4">
    <conflict type="erroneous gene model prediction">
        <sequence resource="EMBL-CDS" id="BAC83260"/>
    </conflict>
</comment>
<comment type="sequence caution" evidence="4">
    <conflict type="erroneous gene model prediction">
        <sequence resource="EMBL-CDS" id="BAD30930"/>
    </conflict>
</comment>
<keyword id="KW-0472">Membrane</keyword>
<keyword id="KW-1185">Reference proteome</keyword>
<keyword id="KW-0732">Signal</keyword>
<keyword id="KW-0812">Transmembrane</keyword>
<keyword id="KW-1133">Transmembrane helix</keyword>
<reference key="1">
    <citation type="journal article" date="2005" name="Nature">
        <title>The map-based sequence of the rice genome.</title>
        <authorList>
            <consortium name="International rice genome sequencing project (IRGSP)"/>
        </authorList>
    </citation>
    <scope>NUCLEOTIDE SEQUENCE [LARGE SCALE GENOMIC DNA]</scope>
    <source>
        <strain>cv. Nipponbare</strain>
    </source>
</reference>
<reference key="2">
    <citation type="journal article" date="2008" name="Nucleic Acids Res.">
        <title>The rice annotation project database (RAP-DB): 2008 update.</title>
        <authorList>
            <consortium name="The rice annotation project (RAP)"/>
        </authorList>
    </citation>
    <scope>GENOME REANNOTATION</scope>
    <source>
        <strain>cv. Nipponbare</strain>
    </source>
</reference>
<reference key="3">
    <citation type="journal article" date="2013" name="Rice">
        <title>Improvement of the Oryza sativa Nipponbare reference genome using next generation sequence and optical map data.</title>
        <authorList>
            <person name="Kawahara Y."/>
            <person name="de la Bastide M."/>
            <person name="Hamilton J.P."/>
            <person name="Kanamori H."/>
            <person name="McCombie W.R."/>
            <person name="Ouyang S."/>
            <person name="Schwartz D.C."/>
            <person name="Tanaka T."/>
            <person name="Wu J."/>
            <person name="Zhou S."/>
            <person name="Childs K.L."/>
            <person name="Davidson R.M."/>
            <person name="Lin H."/>
            <person name="Quesada-Ocampo L."/>
            <person name="Vaillancourt B."/>
            <person name="Sakai H."/>
            <person name="Lee S.S."/>
            <person name="Kim J."/>
            <person name="Numa H."/>
            <person name="Itoh T."/>
            <person name="Buell C.R."/>
            <person name="Matsumoto T."/>
        </authorList>
    </citation>
    <scope>GENOME REANNOTATION</scope>
    <source>
        <strain>cv. Nipponbare</strain>
    </source>
</reference>
<reference key="4">
    <citation type="journal article" date="2003" name="Science">
        <title>Collection, mapping, and annotation of over 28,000 cDNA clones from japonica rice.</title>
        <authorList>
            <consortium name="The rice full-length cDNA consortium"/>
        </authorList>
    </citation>
    <scope>NUCLEOTIDE SEQUENCE [LARGE SCALE MRNA]</scope>
    <source>
        <strain>cv. Nipponbare</strain>
    </source>
</reference>
<reference key="5">
    <citation type="journal article" date="2004" name="BMC Genomics">
        <title>Formin homology 2 domains occur in multiple contexts in angiosperms.</title>
        <authorList>
            <person name="Cvrckova F."/>
            <person name="Novotny M."/>
            <person name="Pickova D."/>
            <person name="Zarsky V."/>
        </authorList>
    </citation>
    <scope>GENE FAMILY</scope>
    <scope>NOMENCLATURE</scope>
</reference>
<feature type="signal peptide" evidence="1">
    <location>
        <begin position="1"/>
        <end position="22"/>
    </location>
</feature>
<feature type="chain" id="PRO_0000319003" description="Formin-like protein 13">
    <location>
        <begin position="23"/>
        <end position="774"/>
    </location>
</feature>
<feature type="transmembrane region" description="Helical" evidence="1">
    <location>
        <begin position="89"/>
        <end position="109"/>
    </location>
</feature>
<feature type="domain" description="FH2" evidence="2">
    <location>
        <begin position="326"/>
        <end position="749"/>
    </location>
</feature>
<feature type="region of interest" description="Disordered" evidence="3">
    <location>
        <begin position="51"/>
        <end position="78"/>
    </location>
</feature>
<feature type="region of interest" description="Disordered" evidence="3">
    <location>
        <begin position="130"/>
        <end position="163"/>
    </location>
</feature>
<feature type="region of interest" description="Disordered" evidence="3">
    <location>
        <begin position="176"/>
        <end position="338"/>
    </location>
</feature>
<feature type="region of interest" description="Disordered" evidence="3">
    <location>
        <begin position="374"/>
        <end position="402"/>
    </location>
</feature>
<feature type="region of interest" description="Disordered" evidence="3">
    <location>
        <begin position="740"/>
        <end position="774"/>
    </location>
</feature>
<feature type="compositionally biased region" description="Pro residues" evidence="3">
    <location>
        <begin position="51"/>
        <end position="67"/>
    </location>
</feature>
<feature type="compositionally biased region" description="Low complexity" evidence="3">
    <location>
        <begin position="68"/>
        <end position="78"/>
    </location>
</feature>
<feature type="compositionally biased region" description="Pro residues" evidence="3">
    <location>
        <begin position="194"/>
        <end position="216"/>
    </location>
</feature>
<feature type="compositionally biased region" description="Low complexity" evidence="3">
    <location>
        <begin position="242"/>
        <end position="261"/>
    </location>
</feature>
<feature type="compositionally biased region" description="Pro residues" evidence="3">
    <location>
        <begin position="262"/>
        <end position="286"/>
    </location>
</feature>
<feature type="sequence conflict" description="In Ref. 4; AK120511." evidence="4" ref="4">
    <original>N</original>
    <variation>D</variation>
    <location>
        <position position="679"/>
    </location>
</feature>
<gene>
    <name type="primary">FH13</name>
    <name type="ordered locus">Os07g0588200</name>
    <name type="ordered locus">LOC_Os07g39920</name>
    <name type="ORF">OJ1047_C01.20</name>
    <name type="ORF">OSJNBb0005G07.114</name>
</gene>
<name>FH13_ORYSJ</name>
<proteinExistence type="evidence at transcript level"/>
<protein>
    <recommendedName>
        <fullName>Formin-like protein 13</fullName>
    </recommendedName>
    <alternativeName>
        <fullName>OsFH13</fullName>
    </alternativeName>
</protein>
<accession>Q0D519</accession>
<accession>A0A0P0X886</accession>
<accession>Q6ZIP3</accession>
<dbReference type="EMBL" id="AP003985">
    <property type="protein sequence ID" value="BAC83260.1"/>
    <property type="status" value="ALT_SEQ"/>
    <property type="molecule type" value="Genomic_DNA"/>
</dbReference>
<dbReference type="EMBL" id="AP005149">
    <property type="protein sequence ID" value="BAD30930.1"/>
    <property type="status" value="ALT_SEQ"/>
    <property type="molecule type" value="Genomic_DNA"/>
</dbReference>
<dbReference type="EMBL" id="AP008213">
    <property type="protein sequence ID" value="BAF22054.1"/>
    <property type="molecule type" value="Genomic_DNA"/>
</dbReference>
<dbReference type="EMBL" id="AP014963">
    <property type="protein sequence ID" value="BAT02412.1"/>
    <property type="molecule type" value="Genomic_DNA"/>
</dbReference>
<dbReference type="EMBL" id="AK120511">
    <property type="status" value="NOT_ANNOTATED_CDS"/>
    <property type="molecule type" value="mRNA"/>
</dbReference>
<dbReference type="RefSeq" id="XP_015644673.1">
    <property type="nucleotide sequence ID" value="XM_015789187.1"/>
</dbReference>
<dbReference type="SMR" id="Q0D519"/>
<dbReference type="FunCoup" id="Q0D519">
    <property type="interactions" value="1"/>
</dbReference>
<dbReference type="STRING" id="39947.Q0D519"/>
<dbReference type="PaxDb" id="39947-Q0D519"/>
<dbReference type="EnsemblPlants" id="Os07t0588200-01">
    <property type="protein sequence ID" value="Os07t0588200-01"/>
    <property type="gene ID" value="Os07g0588200"/>
</dbReference>
<dbReference type="Gramene" id="Os07t0588200-01">
    <property type="protein sequence ID" value="Os07t0588200-01"/>
    <property type="gene ID" value="Os07g0588200"/>
</dbReference>
<dbReference type="KEGG" id="dosa:Os07g0588200"/>
<dbReference type="eggNOG" id="KOG1922">
    <property type="taxonomic scope" value="Eukaryota"/>
</dbReference>
<dbReference type="HOGENOM" id="CLU_007699_0_1_1"/>
<dbReference type="InParanoid" id="Q0D519"/>
<dbReference type="OMA" id="IEWSPPP"/>
<dbReference type="OrthoDB" id="1668162at2759"/>
<dbReference type="Proteomes" id="UP000000763">
    <property type="component" value="Chromosome 7"/>
</dbReference>
<dbReference type="Proteomes" id="UP000059680">
    <property type="component" value="Chromosome 7"/>
</dbReference>
<dbReference type="ExpressionAtlas" id="Q0D519">
    <property type="expression patterns" value="baseline and differential"/>
</dbReference>
<dbReference type="GO" id="GO:0005856">
    <property type="term" value="C:cytoskeleton"/>
    <property type="evidence" value="ECO:0000318"/>
    <property type="project" value="GO_Central"/>
</dbReference>
<dbReference type="GO" id="GO:0016020">
    <property type="term" value="C:membrane"/>
    <property type="evidence" value="ECO:0007669"/>
    <property type="project" value="UniProtKB-SubCell"/>
</dbReference>
<dbReference type="GO" id="GO:0051015">
    <property type="term" value="F:actin filament binding"/>
    <property type="evidence" value="ECO:0000318"/>
    <property type="project" value="GO_Central"/>
</dbReference>
<dbReference type="GO" id="GO:0030036">
    <property type="term" value="P:actin cytoskeleton organization"/>
    <property type="evidence" value="ECO:0000318"/>
    <property type="project" value="GO_Central"/>
</dbReference>
<dbReference type="GO" id="GO:0045010">
    <property type="term" value="P:actin nucleation"/>
    <property type="evidence" value="ECO:0007669"/>
    <property type="project" value="InterPro"/>
</dbReference>
<dbReference type="Gene3D" id="1.20.58.2220">
    <property type="entry name" value="Formin, FH2 domain"/>
    <property type="match status" value="1"/>
</dbReference>
<dbReference type="InterPro" id="IPR015425">
    <property type="entry name" value="FH2_Formin"/>
</dbReference>
<dbReference type="InterPro" id="IPR042201">
    <property type="entry name" value="FH2_Formin_sf"/>
</dbReference>
<dbReference type="InterPro" id="IPR027643">
    <property type="entry name" value="Formin-like_plant"/>
</dbReference>
<dbReference type="PANTHER" id="PTHR23213:SF257">
    <property type="entry name" value="FORMIN-LIKE PROTEIN 13"/>
    <property type="match status" value="1"/>
</dbReference>
<dbReference type="PANTHER" id="PTHR23213">
    <property type="entry name" value="FORMIN-RELATED"/>
    <property type="match status" value="1"/>
</dbReference>
<dbReference type="Pfam" id="PF02181">
    <property type="entry name" value="FH2"/>
    <property type="match status" value="1"/>
</dbReference>
<dbReference type="SMART" id="SM00498">
    <property type="entry name" value="FH2"/>
    <property type="match status" value="1"/>
</dbReference>
<dbReference type="SUPFAM" id="SSF101447">
    <property type="entry name" value="Formin homology 2 domain (FH2 domain)"/>
    <property type="match status" value="1"/>
</dbReference>
<dbReference type="PROSITE" id="PS51444">
    <property type="entry name" value="FH2"/>
    <property type="match status" value="1"/>
</dbReference>
<organism>
    <name type="scientific">Oryza sativa subsp. japonica</name>
    <name type="common">Rice</name>
    <dbReference type="NCBI Taxonomy" id="39947"/>
    <lineage>
        <taxon>Eukaryota</taxon>
        <taxon>Viridiplantae</taxon>
        <taxon>Streptophyta</taxon>
        <taxon>Embryophyta</taxon>
        <taxon>Tracheophyta</taxon>
        <taxon>Spermatophyta</taxon>
        <taxon>Magnoliopsida</taxon>
        <taxon>Liliopsida</taxon>
        <taxon>Poales</taxon>
        <taxon>Poaceae</taxon>
        <taxon>BOP clade</taxon>
        <taxon>Oryzoideae</taxon>
        <taxon>Oryzeae</taxon>
        <taxon>Oryzinae</taxon>
        <taxon>Oryza</taxon>
        <taxon>Oryza sativa</taxon>
    </lineage>
</organism>
<evidence type="ECO:0000255" key="1"/>
<evidence type="ECO:0000255" key="2">
    <source>
        <dbReference type="PROSITE-ProRule" id="PRU00774"/>
    </source>
</evidence>
<evidence type="ECO:0000256" key="3">
    <source>
        <dbReference type="SAM" id="MobiDB-lite"/>
    </source>
</evidence>
<evidence type="ECO:0000305" key="4"/>